<evidence type="ECO:0000250" key="1"/>
<evidence type="ECO:0000255" key="2">
    <source>
        <dbReference type="PROSITE-ProRule" id="PRU00809"/>
    </source>
</evidence>
<evidence type="ECO:0000269" key="3">
    <source>
    </source>
</evidence>
<evidence type="ECO:0000269" key="4">
    <source>
    </source>
</evidence>
<evidence type="ECO:0000269" key="5">
    <source>
    </source>
</evidence>
<evidence type="ECO:0000303" key="6">
    <source>
    </source>
</evidence>
<evidence type="ECO:0000305" key="7"/>
<evidence type="ECO:0000305" key="8">
    <source>
    </source>
</evidence>
<keyword id="KW-0025">Alternative splicing</keyword>
<keyword id="KW-0963">Cytoplasm</keyword>
<keyword id="KW-0539">Nucleus</keyword>
<keyword id="KW-0647">Proteasome</keyword>
<keyword id="KW-1185">Reference proteome</keyword>
<dbReference type="EMBL" id="Y13173">
    <property type="protein sequence ID" value="CAA73616.1"/>
    <property type="status" value="ALT_FRAME"/>
    <property type="molecule type" value="mRNA"/>
</dbReference>
<dbReference type="EMBL" id="AF043532">
    <property type="protein sequence ID" value="AAC32068.1"/>
    <property type="status" value="ALT_FRAME"/>
    <property type="molecule type" value="mRNA"/>
</dbReference>
<dbReference type="EMBL" id="AC007727">
    <property type="protein sequence ID" value="AAD41426.1"/>
    <property type="molecule type" value="Genomic_DNA"/>
</dbReference>
<dbReference type="EMBL" id="CP002684">
    <property type="protein sequence ID" value="AEE30146.1"/>
    <property type="molecule type" value="Genomic_DNA"/>
</dbReference>
<dbReference type="EMBL" id="AY065070">
    <property type="protein sequence ID" value="AAL38246.1"/>
    <property type="molecule type" value="mRNA"/>
</dbReference>
<dbReference type="EMBL" id="AY114628">
    <property type="protein sequence ID" value="AAM47947.1"/>
    <property type="molecule type" value="mRNA"/>
</dbReference>
<dbReference type="EMBL" id="AF344327">
    <property type="protein sequence ID" value="AAK06878.1"/>
    <property type="molecule type" value="mRNA"/>
</dbReference>
<dbReference type="EMBL" id="AK226397">
    <property type="protein sequence ID" value="BAE98543.1"/>
    <property type="molecule type" value="mRNA"/>
</dbReference>
<dbReference type="EMBL" id="AY085532">
    <property type="protein sequence ID" value="AAM62756.1"/>
    <property type="molecule type" value="mRNA"/>
</dbReference>
<dbReference type="PIR" id="F86350">
    <property type="entry name" value="F86350"/>
</dbReference>
<dbReference type="RefSeq" id="NP_564149.1">
    <molecule id="Q9XI05-1"/>
    <property type="nucleotide sequence ID" value="NM_102021.3"/>
</dbReference>
<dbReference type="SMR" id="Q9XI05"/>
<dbReference type="BioGRID" id="24015">
    <property type="interactions" value="39"/>
</dbReference>
<dbReference type="FunCoup" id="Q9XI05">
    <property type="interactions" value="4748"/>
</dbReference>
<dbReference type="STRING" id="3702.Q9XI05"/>
<dbReference type="PaxDb" id="3702-AT1G21720.1"/>
<dbReference type="ProteomicsDB" id="250588">
    <molecule id="Q9XI05-1"/>
</dbReference>
<dbReference type="EnsemblPlants" id="AT1G21720.1">
    <molecule id="Q9XI05-1"/>
    <property type="protein sequence ID" value="AT1G21720.1"/>
    <property type="gene ID" value="AT1G21720"/>
</dbReference>
<dbReference type="GeneID" id="838776"/>
<dbReference type="Gramene" id="AT1G21720.1">
    <molecule id="Q9XI05-1"/>
    <property type="protein sequence ID" value="AT1G21720.1"/>
    <property type="gene ID" value="AT1G21720"/>
</dbReference>
<dbReference type="KEGG" id="ath:AT1G21720"/>
<dbReference type="Araport" id="AT1G21720"/>
<dbReference type="TAIR" id="AT1G21720">
    <property type="gene designation" value="PBC1"/>
</dbReference>
<dbReference type="eggNOG" id="KOG0180">
    <property type="taxonomic scope" value="Eukaryota"/>
</dbReference>
<dbReference type="HOGENOM" id="CLU_035750_10_0_1"/>
<dbReference type="InParanoid" id="Q9XI05"/>
<dbReference type="OMA" id="CSEQLYG"/>
<dbReference type="OrthoDB" id="1028647at2759"/>
<dbReference type="PhylomeDB" id="Q9XI05"/>
<dbReference type="CD-CODE" id="4299E36E">
    <property type="entry name" value="Nucleolus"/>
</dbReference>
<dbReference type="PRO" id="PR:Q9XI05"/>
<dbReference type="Proteomes" id="UP000006548">
    <property type="component" value="Chromosome 1"/>
</dbReference>
<dbReference type="ExpressionAtlas" id="Q9XI05">
    <property type="expression patterns" value="baseline and differential"/>
</dbReference>
<dbReference type="GO" id="GO:0005634">
    <property type="term" value="C:nucleus"/>
    <property type="evidence" value="ECO:0007005"/>
    <property type="project" value="TAIR"/>
</dbReference>
<dbReference type="GO" id="GO:0000325">
    <property type="term" value="C:plant-type vacuole"/>
    <property type="evidence" value="ECO:0007005"/>
    <property type="project" value="TAIR"/>
</dbReference>
<dbReference type="GO" id="GO:0000502">
    <property type="term" value="C:proteasome complex"/>
    <property type="evidence" value="ECO:0000314"/>
    <property type="project" value="TAIR"/>
</dbReference>
<dbReference type="GO" id="GO:0019774">
    <property type="term" value="C:proteasome core complex, beta-subunit complex"/>
    <property type="evidence" value="ECO:0000250"/>
    <property type="project" value="UniProtKB"/>
</dbReference>
<dbReference type="GO" id="GO:0099503">
    <property type="term" value="C:secretory vesicle"/>
    <property type="evidence" value="ECO:0007005"/>
    <property type="project" value="TAIR"/>
</dbReference>
<dbReference type="GO" id="GO:0043161">
    <property type="term" value="P:proteasome-mediated ubiquitin-dependent protein catabolic process"/>
    <property type="evidence" value="ECO:0007669"/>
    <property type="project" value="InterPro"/>
</dbReference>
<dbReference type="CDD" id="cd03759">
    <property type="entry name" value="proteasome_beta_type_3"/>
    <property type="match status" value="1"/>
</dbReference>
<dbReference type="FunFam" id="3.60.20.10:FF:000032">
    <property type="entry name" value="Proteasome subunit beta"/>
    <property type="match status" value="1"/>
</dbReference>
<dbReference type="Gene3D" id="3.60.20.10">
    <property type="entry name" value="Glutamine Phosphoribosylpyrophosphate, subunit 1, domain 1"/>
    <property type="match status" value="1"/>
</dbReference>
<dbReference type="InterPro" id="IPR029055">
    <property type="entry name" value="Ntn_hydrolases_N"/>
</dbReference>
<dbReference type="InterPro" id="IPR033811">
    <property type="entry name" value="Proteasome_beta_3"/>
</dbReference>
<dbReference type="InterPro" id="IPR016050">
    <property type="entry name" value="Proteasome_bsu_CS"/>
</dbReference>
<dbReference type="InterPro" id="IPR001353">
    <property type="entry name" value="Proteasome_sua/b"/>
</dbReference>
<dbReference type="InterPro" id="IPR023333">
    <property type="entry name" value="Proteasome_suB-type"/>
</dbReference>
<dbReference type="PANTHER" id="PTHR32194">
    <property type="entry name" value="METALLOPROTEASE TLDD"/>
    <property type="match status" value="1"/>
</dbReference>
<dbReference type="PANTHER" id="PTHR32194:SF10">
    <property type="entry name" value="PROTEASOME SUBUNIT BETA TYPE-3"/>
    <property type="match status" value="1"/>
</dbReference>
<dbReference type="Pfam" id="PF00227">
    <property type="entry name" value="Proteasome"/>
    <property type="match status" value="1"/>
</dbReference>
<dbReference type="SUPFAM" id="SSF56235">
    <property type="entry name" value="N-terminal nucleophile aminohydrolases (Ntn hydrolases)"/>
    <property type="match status" value="1"/>
</dbReference>
<dbReference type="PROSITE" id="PS00854">
    <property type="entry name" value="PROTEASOME_BETA_1"/>
    <property type="match status" value="1"/>
</dbReference>
<dbReference type="PROSITE" id="PS51476">
    <property type="entry name" value="PROTEASOME_BETA_2"/>
    <property type="match status" value="1"/>
</dbReference>
<proteinExistence type="evidence at protein level"/>
<accession>Q9XI05</accession>
<accession>O23707</accession>
<accession>Q0WWF5</accession>
<accession>Q8LEA7</accession>
<accession>Q8VZC4</accession>
<comment type="function">
    <text>Non-catalytic component of the proteasome, a multicatalytic proteinase complex which is characterized by its ability to cleave peptides with Arg, Phe, Tyr, Leu, and Glu adjacent to the leaving group at neutral or slightly basic pH. The proteasome has an ATP-dependent proteolytic activity.</text>
</comment>
<comment type="subunit">
    <text evidence="3 4 5">Component of the 20S core complex of the 26S proteasome. The 26S proteasome is composed of a core protease (CP), known as the 20S proteasome, capped at one or both ends by the 19S regulatory particle (RP/PA700). The 20S proteasome core is composed of 28 subunits that are arranged in four stacked rings, resulting in a barrel-shaped structure. The two end rings are each formed by seven alpha subunits, and the two central rings are each formed by seven beta subunits. The catalytic chamber with the active sites is on the inside of the barrel.</text>
</comment>
<comment type="subcellular location">
    <subcellularLocation>
        <location evidence="2">Cytoplasm</location>
    </subcellularLocation>
    <subcellularLocation>
        <location evidence="1">Nucleus</location>
    </subcellularLocation>
</comment>
<comment type="alternative products">
    <event type="alternative splicing"/>
    <isoform>
        <id>Q9XI05-1</id>
        <name>1</name>
        <sequence type="displayed"/>
    </isoform>
    <isoform>
        <id>Q9XI05-2</id>
        <name>2</name>
        <sequence type="described" ref="VSP_016143"/>
    </isoform>
</comment>
<comment type="miscellaneous">
    <molecule>Isoform 2</molecule>
    <text evidence="7">May be due to intron retention.</text>
</comment>
<comment type="similarity">
    <text evidence="2">Belongs to the peptidase T1B family.</text>
</comment>
<comment type="sequence caution" evidence="7">
    <conflict type="frameshift">
        <sequence resource="EMBL-CDS" id="AAC32068"/>
    </conflict>
</comment>
<comment type="sequence caution" evidence="7">
    <conflict type="frameshift">
        <sequence resource="EMBL-CDS" id="CAA73616"/>
    </conflict>
</comment>
<reference key="1">
    <citation type="journal article" date="1997" name="FEBS Lett.">
        <title>The 20S proteasome gene family in Arabidopsis thaliana.</title>
        <authorList>
            <person name="Parmentier Y."/>
            <person name="Bouchez D."/>
            <person name="Fleck J."/>
            <person name="Genschik P."/>
        </authorList>
    </citation>
    <scope>NUCLEOTIDE SEQUENCE [MRNA] (ISOFORM 1)</scope>
    <source>
        <strain>cv. Columbia</strain>
    </source>
</reference>
<reference key="2">
    <citation type="journal article" date="1998" name="Genetics">
        <title>Molecular organization of the 20S proteasome gene family from Arabidopsis thaliana.</title>
        <authorList>
            <person name="Fu H."/>
            <person name="Doelling J.H."/>
            <person name="Arendt C.S."/>
            <person name="Hochstrasser M."/>
            <person name="Vierstra R.D."/>
        </authorList>
    </citation>
    <scope>NUCLEOTIDE SEQUENCE [MRNA] (ISOFORM 1)</scope>
    <scope>GENE FAMILY</scope>
    <scope>NOMENCLATURE</scope>
    <source>
        <strain>cv. Columbia</strain>
    </source>
</reference>
<reference key="3">
    <citation type="journal article" date="2000" name="Nature">
        <title>Sequence and analysis of chromosome 1 of the plant Arabidopsis thaliana.</title>
        <authorList>
            <person name="Theologis A."/>
            <person name="Ecker J.R."/>
            <person name="Palm C.J."/>
            <person name="Federspiel N.A."/>
            <person name="Kaul S."/>
            <person name="White O."/>
            <person name="Alonso J."/>
            <person name="Altafi H."/>
            <person name="Araujo R."/>
            <person name="Bowman C.L."/>
            <person name="Brooks S.Y."/>
            <person name="Buehler E."/>
            <person name="Chan A."/>
            <person name="Chao Q."/>
            <person name="Chen H."/>
            <person name="Cheuk R.F."/>
            <person name="Chin C.W."/>
            <person name="Chung M.K."/>
            <person name="Conn L."/>
            <person name="Conway A.B."/>
            <person name="Conway A.R."/>
            <person name="Creasy T.H."/>
            <person name="Dewar K."/>
            <person name="Dunn P."/>
            <person name="Etgu P."/>
            <person name="Feldblyum T.V."/>
            <person name="Feng J.-D."/>
            <person name="Fong B."/>
            <person name="Fujii C.Y."/>
            <person name="Gill J.E."/>
            <person name="Goldsmith A.D."/>
            <person name="Haas B."/>
            <person name="Hansen N.F."/>
            <person name="Hughes B."/>
            <person name="Huizar L."/>
            <person name="Hunter J.L."/>
            <person name="Jenkins J."/>
            <person name="Johnson-Hopson C."/>
            <person name="Khan S."/>
            <person name="Khaykin E."/>
            <person name="Kim C.J."/>
            <person name="Koo H.L."/>
            <person name="Kremenetskaia I."/>
            <person name="Kurtz D.B."/>
            <person name="Kwan A."/>
            <person name="Lam B."/>
            <person name="Langin-Hooper S."/>
            <person name="Lee A."/>
            <person name="Lee J.M."/>
            <person name="Lenz C.A."/>
            <person name="Li J.H."/>
            <person name="Li Y.-P."/>
            <person name="Lin X."/>
            <person name="Liu S.X."/>
            <person name="Liu Z.A."/>
            <person name="Luros J.S."/>
            <person name="Maiti R."/>
            <person name="Marziali A."/>
            <person name="Militscher J."/>
            <person name="Miranda M."/>
            <person name="Nguyen M."/>
            <person name="Nierman W.C."/>
            <person name="Osborne B.I."/>
            <person name="Pai G."/>
            <person name="Peterson J."/>
            <person name="Pham P.K."/>
            <person name="Rizzo M."/>
            <person name="Rooney T."/>
            <person name="Rowley D."/>
            <person name="Sakano H."/>
            <person name="Salzberg S.L."/>
            <person name="Schwartz J.R."/>
            <person name="Shinn P."/>
            <person name="Southwick A.M."/>
            <person name="Sun H."/>
            <person name="Tallon L.J."/>
            <person name="Tambunga G."/>
            <person name="Toriumi M.J."/>
            <person name="Town C.D."/>
            <person name="Utterback T."/>
            <person name="Van Aken S."/>
            <person name="Vaysberg M."/>
            <person name="Vysotskaia V.S."/>
            <person name="Walker M."/>
            <person name="Wu D."/>
            <person name="Yu G."/>
            <person name="Fraser C.M."/>
            <person name="Venter J.C."/>
            <person name="Davis R.W."/>
        </authorList>
    </citation>
    <scope>NUCLEOTIDE SEQUENCE [LARGE SCALE GENOMIC DNA]</scope>
    <source>
        <strain>cv. Columbia</strain>
    </source>
</reference>
<reference key="4">
    <citation type="journal article" date="2017" name="Plant J.">
        <title>Araport11: a complete reannotation of the Arabidopsis thaliana reference genome.</title>
        <authorList>
            <person name="Cheng C.Y."/>
            <person name="Krishnakumar V."/>
            <person name="Chan A.P."/>
            <person name="Thibaud-Nissen F."/>
            <person name="Schobel S."/>
            <person name="Town C.D."/>
        </authorList>
    </citation>
    <scope>GENOME REANNOTATION</scope>
    <source>
        <strain>cv. Columbia</strain>
    </source>
</reference>
<reference key="5">
    <citation type="journal article" date="2003" name="Science">
        <title>Empirical analysis of transcriptional activity in the Arabidopsis genome.</title>
        <authorList>
            <person name="Yamada K."/>
            <person name="Lim J."/>
            <person name="Dale J.M."/>
            <person name="Chen H."/>
            <person name="Shinn P."/>
            <person name="Palm C.J."/>
            <person name="Southwick A.M."/>
            <person name="Wu H.C."/>
            <person name="Kim C.J."/>
            <person name="Nguyen M."/>
            <person name="Pham P.K."/>
            <person name="Cheuk R.F."/>
            <person name="Karlin-Newmann G."/>
            <person name="Liu S.X."/>
            <person name="Lam B."/>
            <person name="Sakano H."/>
            <person name="Wu T."/>
            <person name="Yu G."/>
            <person name="Miranda M."/>
            <person name="Quach H.L."/>
            <person name="Tripp M."/>
            <person name="Chang C.H."/>
            <person name="Lee J.M."/>
            <person name="Toriumi M.J."/>
            <person name="Chan M.M."/>
            <person name="Tang C.C."/>
            <person name="Onodera C.S."/>
            <person name="Deng J.M."/>
            <person name="Akiyama K."/>
            <person name="Ansari Y."/>
            <person name="Arakawa T."/>
            <person name="Banh J."/>
            <person name="Banno F."/>
            <person name="Bowser L."/>
            <person name="Brooks S.Y."/>
            <person name="Carninci P."/>
            <person name="Chao Q."/>
            <person name="Choy N."/>
            <person name="Enju A."/>
            <person name="Goldsmith A.D."/>
            <person name="Gurjal M."/>
            <person name="Hansen N.F."/>
            <person name="Hayashizaki Y."/>
            <person name="Johnson-Hopson C."/>
            <person name="Hsuan V.W."/>
            <person name="Iida K."/>
            <person name="Karnes M."/>
            <person name="Khan S."/>
            <person name="Koesema E."/>
            <person name="Ishida J."/>
            <person name="Jiang P.X."/>
            <person name="Jones T."/>
            <person name="Kawai J."/>
            <person name="Kamiya A."/>
            <person name="Meyers C."/>
            <person name="Nakajima M."/>
            <person name="Narusaka M."/>
            <person name="Seki M."/>
            <person name="Sakurai T."/>
            <person name="Satou M."/>
            <person name="Tamse R."/>
            <person name="Vaysberg M."/>
            <person name="Wallender E.K."/>
            <person name="Wong C."/>
            <person name="Yamamura Y."/>
            <person name="Yuan S."/>
            <person name="Shinozaki K."/>
            <person name="Davis R.W."/>
            <person name="Theologis A."/>
            <person name="Ecker J.R."/>
        </authorList>
    </citation>
    <scope>NUCLEOTIDE SEQUENCE [LARGE SCALE MRNA] (ISOFORMS 1 AND 2)</scope>
    <source>
        <strain>cv. Columbia</strain>
    </source>
</reference>
<reference key="6">
    <citation type="submission" date="2006-07" db="EMBL/GenBank/DDBJ databases">
        <title>Large-scale analysis of RIKEN Arabidopsis full-length (RAFL) cDNAs.</title>
        <authorList>
            <person name="Totoki Y."/>
            <person name="Seki M."/>
            <person name="Ishida J."/>
            <person name="Nakajima M."/>
            <person name="Enju A."/>
            <person name="Kamiya A."/>
            <person name="Narusaka M."/>
            <person name="Shin-i T."/>
            <person name="Nakagawa M."/>
            <person name="Sakamoto N."/>
            <person name="Oishi K."/>
            <person name="Kohara Y."/>
            <person name="Kobayashi M."/>
            <person name="Toyoda A."/>
            <person name="Sakaki Y."/>
            <person name="Sakurai T."/>
            <person name="Iida K."/>
            <person name="Akiyama K."/>
            <person name="Satou M."/>
            <person name="Toyoda T."/>
            <person name="Konagaya A."/>
            <person name="Carninci P."/>
            <person name="Kawai J."/>
            <person name="Hayashizaki Y."/>
            <person name="Shinozaki K."/>
        </authorList>
    </citation>
    <scope>NUCLEOTIDE SEQUENCE [LARGE SCALE MRNA] (ISOFORM 1)</scope>
    <source>
        <strain>cv. Columbia</strain>
    </source>
</reference>
<reference key="7">
    <citation type="submission" date="2002-03" db="EMBL/GenBank/DDBJ databases">
        <title>Full-length cDNA from Arabidopsis thaliana.</title>
        <authorList>
            <person name="Brover V.V."/>
            <person name="Troukhan M.E."/>
            <person name="Alexandrov N.A."/>
            <person name="Lu Y.-P."/>
            <person name="Flavell R.B."/>
            <person name="Feldmann K.A."/>
        </authorList>
    </citation>
    <scope>NUCLEOTIDE SEQUENCE [LARGE SCALE MRNA] (ISOFORM 1)</scope>
</reference>
<reference key="8">
    <citation type="journal article" date="1999" name="Mol. Biol. Rep.">
        <title>Structure and functional analyses of the 26S proteasome subunits from plants.</title>
        <authorList>
            <person name="Fu H."/>
            <person name="Girod P.-A."/>
            <person name="Doelling J.H."/>
            <person name="van Nocker S."/>
            <person name="Hochstrasser M."/>
            <person name="Finley D."/>
            <person name="Vierstra R.D."/>
        </authorList>
    </citation>
    <scope>SUBUNIT</scope>
</reference>
<reference key="9">
    <citation type="journal article" date="2004" name="J. Biol. Chem.">
        <title>Purification of the Arabidopsis 26 S proteasome: biochemical and molecular analyses revealed the presence of multiple isoforms.</title>
        <authorList>
            <person name="Yang P."/>
            <person name="Fu H."/>
            <person name="Walker J."/>
            <person name="Papa C.M."/>
            <person name="Smalle J."/>
            <person name="Ju Y.-M."/>
            <person name="Vierstra R.D."/>
        </authorList>
    </citation>
    <scope>SUBUNIT</scope>
    <scope>IDENTIFICATION BY MASS SPECTROMETRY</scope>
</reference>
<reference key="10">
    <citation type="journal article" date="2010" name="J. Biol. Chem.">
        <title>Affinity purification of the Arabidopsis 26 S proteasome reveals a diverse array of plant proteolytic complexes.</title>
        <authorList>
            <person name="Book A.J."/>
            <person name="Gladman N.P."/>
            <person name="Lee S.S."/>
            <person name="Scalf M."/>
            <person name="Smith L.M."/>
            <person name="Vierstra R.D."/>
        </authorList>
    </citation>
    <scope>IDENTIFICATION BY MASS SPECTROMETRY</scope>
    <scope>CHARACTERIZATION OF THE 26S PROTEASOME COMPLEX</scope>
    <scope>SUBUNIT</scope>
    <scope>CLEAVAGE OF INITIATOR METHIONINE</scope>
</reference>
<gene>
    <name type="primary">PBC1</name>
    <name type="synonym">PRCT</name>
    <name type="ordered locus">At1g21720</name>
    <name type="ORF">F8K7.15</name>
</gene>
<protein>
    <recommendedName>
        <fullName>Proteasome subunit beta type-3-A</fullName>
    </recommendedName>
    <alternativeName>
        <fullName>20S proteasome beta subunit C-1</fullName>
    </alternativeName>
    <alternativeName>
        <fullName>Proteasome component T</fullName>
    </alternativeName>
</protein>
<feature type="initiator methionine" description="Removed" evidence="8">
    <location>
        <position position="1"/>
    </location>
</feature>
<feature type="chain" id="PRO_0000148065" description="Proteasome subunit beta type-3-A">
    <location>
        <begin position="2"/>
        <end position="204"/>
    </location>
</feature>
<feature type="splice variant" id="VSP_016143" description="In isoform 2." evidence="6">
    <original>S</original>
    <variation>Q</variation>
    <location>
        <position position="2"/>
    </location>
</feature>
<feature type="sequence conflict" description="In Ref. 7; AAM62756." evidence="7" ref="7">
    <original>G</original>
    <variation>V</variation>
    <location>
        <position position="8"/>
    </location>
</feature>
<organism>
    <name type="scientific">Arabidopsis thaliana</name>
    <name type="common">Mouse-ear cress</name>
    <dbReference type="NCBI Taxonomy" id="3702"/>
    <lineage>
        <taxon>Eukaryota</taxon>
        <taxon>Viridiplantae</taxon>
        <taxon>Streptophyta</taxon>
        <taxon>Embryophyta</taxon>
        <taxon>Tracheophyta</taxon>
        <taxon>Spermatophyta</taxon>
        <taxon>Magnoliopsida</taxon>
        <taxon>eudicotyledons</taxon>
        <taxon>Gunneridae</taxon>
        <taxon>Pentapetalae</taxon>
        <taxon>rosids</taxon>
        <taxon>malvids</taxon>
        <taxon>Brassicales</taxon>
        <taxon>Brassicaceae</taxon>
        <taxon>Camelineae</taxon>
        <taxon>Arabidopsis</taxon>
    </lineage>
</organism>
<name>PSB3A_ARATH</name>
<sequence>MSIFEYNGSAVVAMVGKNCFAIASDRRLGVQLQTIATDFQRISKIHDRVFIGLSGLATDVQTLYQRLVFRHKLYQLREERDMKPETFASLVSAILYEKRFGPYLCQPVIAGLGDDDKPFICTMDSIGAKELAKDFVVSGTASESLYGACEAMYKPDMEAEELFETISQALLSSVDRDCLSGWGGHVYIVTPTEIKERILKGRMD</sequence>